<dbReference type="EMBL" id="AJ277893">
    <property type="protein sequence ID" value="CAC21398.1"/>
    <property type="status" value="ALT_INIT"/>
    <property type="molecule type" value="Genomic_DNA"/>
</dbReference>
<dbReference type="EMBL" id="CP000627">
    <property type="protein sequence ID" value="ABQ20141.1"/>
    <property type="molecule type" value="Genomic_DNA"/>
</dbReference>
<dbReference type="EMBL" id="CP001235">
    <property type="protein sequence ID" value="ACP09001.1"/>
    <property type="molecule type" value="Genomic_DNA"/>
</dbReference>
<dbReference type="RefSeq" id="WP_001027396.1">
    <property type="nucleotide sequence ID" value="NZ_JAACZH010000005.1"/>
</dbReference>
<dbReference type="SMR" id="A5F2W6"/>
<dbReference type="KEGG" id="vco:VC0395_A0495"/>
<dbReference type="KEGG" id="vcr:VC395_0989"/>
<dbReference type="PATRIC" id="fig|345073.21.peg.958"/>
<dbReference type="eggNOG" id="COG0789">
    <property type="taxonomic scope" value="Bacteria"/>
</dbReference>
<dbReference type="HOGENOM" id="CLU_060077_2_0_6"/>
<dbReference type="OrthoDB" id="9802039at2"/>
<dbReference type="Proteomes" id="UP000000249">
    <property type="component" value="Chromosome 2"/>
</dbReference>
<dbReference type="GO" id="GO:0005737">
    <property type="term" value="C:cytoplasm"/>
    <property type="evidence" value="ECO:0007669"/>
    <property type="project" value="UniProtKB-SubCell"/>
</dbReference>
<dbReference type="GO" id="GO:0005507">
    <property type="term" value="F:copper ion binding"/>
    <property type="evidence" value="ECO:0007669"/>
    <property type="project" value="InterPro"/>
</dbReference>
<dbReference type="GO" id="GO:0003677">
    <property type="term" value="F:DNA binding"/>
    <property type="evidence" value="ECO:0007669"/>
    <property type="project" value="UniProtKB-KW"/>
</dbReference>
<dbReference type="GO" id="GO:0003700">
    <property type="term" value="F:DNA-binding transcription factor activity"/>
    <property type="evidence" value="ECO:0007669"/>
    <property type="project" value="InterPro"/>
</dbReference>
<dbReference type="GO" id="GO:0045893">
    <property type="term" value="P:positive regulation of DNA-templated transcription"/>
    <property type="evidence" value="ECO:0007669"/>
    <property type="project" value="InterPro"/>
</dbReference>
<dbReference type="CDD" id="cd01108">
    <property type="entry name" value="HTH_CueR"/>
    <property type="match status" value="1"/>
</dbReference>
<dbReference type="Gene3D" id="1.10.1660.10">
    <property type="match status" value="1"/>
</dbReference>
<dbReference type="InterPro" id="IPR011789">
    <property type="entry name" value="CueR"/>
</dbReference>
<dbReference type="InterPro" id="IPR009061">
    <property type="entry name" value="DNA-bd_dom_put_sf"/>
</dbReference>
<dbReference type="InterPro" id="IPR000551">
    <property type="entry name" value="MerR-type_HTH_dom"/>
</dbReference>
<dbReference type="InterPro" id="IPR047057">
    <property type="entry name" value="MerR_fam"/>
</dbReference>
<dbReference type="NCBIfam" id="TIGR02044">
    <property type="entry name" value="CueR"/>
    <property type="match status" value="1"/>
</dbReference>
<dbReference type="PANTHER" id="PTHR30204:SF16">
    <property type="entry name" value="HTH-TYPE TRANSCRIPTIONAL REGULATOR CUER"/>
    <property type="match status" value="1"/>
</dbReference>
<dbReference type="PANTHER" id="PTHR30204">
    <property type="entry name" value="REDOX-CYCLING DRUG-SENSING TRANSCRIPTIONAL ACTIVATOR SOXR"/>
    <property type="match status" value="1"/>
</dbReference>
<dbReference type="Pfam" id="PF13411">
    <property type="entry name" value="MerR_1"/>
    <property type="match status" value="1"/>
</dbReference>
<dbReference type="SMART" id="SM00422">
    <property type="entry name" value="HTH_MERR"/>
    <property type="match status" value="1"/>
</dbReference>
<dbReference type="SUPFAM" id="SSF46955">
    <property type="entry name" value="Putative DNA-binding domain"/>
    <property type="match status" value="1"/>
</dbReference>
<dbReference type="PROSITE" id="PS00552">
    <property type="entry name" value="HTH_MERR_1"/>
    <property type="match status" value="1"/>
</dbReference>
<dbReference type="PROSITE" id="PS50937">
    <property type="entry name" value="HTH_MERR_2"/>
    <property type="match status" value="1"/>
</dbReference>
<reference key="1">
    <citation type="submission" date="2000-05" db="EMBL/GenBank/DDBJ databases">
        <authorList>
            <person name="Srivastava B.S."/>
        </authorList>
    </citation>
    <scope>NUCLEOTIDE SEQUENCE [GENOMIC DNA]</scope>
</reference>
<reference key="2">
    <citation type="submission" date="2007-03" db="EMBL/GenBank/DDBJ databases">
        <authorList>
            <person name="Heidelberg J."/>
        </authorList>
    </citation>
    <scope>NUCLEOTIDE SEQUENCE [LARGE SCALE GENOMIC DNA]</scope>
    <source>
        <strain>ATCC 39541 / Classical Ogawa 395 / O395</strain>
    </source>
</reference>
<reference key="3">
    <citation type="journal article" date="2008" name="PLoS ONE">
        <title>A recalibrated molecular clock and independent origins for the cholera pandemic clones.</title>
        <authorList>
            <person name="Feng L."/>
            <person name="Reeves P.R."/>
            <person name="Lan R."/>
            <person name="Ren Y."/>
            <person name="Gao C."/>
            <person name="Zhou Z."/>
            <person name="Ren Y."/>
            <person name="Cheng J."/>
            <person name="Wang W."/>
            <person name="Wang J."/>
            <person name="Qian W."/>
            <person name="Li D."/>
            <person name="Wang L."/>
        </authorList>
    </citation>
    <scope>NUCLEOTIDE SEQUENCE [LARGE SCALE GENOMIC DNA]</scope>
    <source>
        <strain>ATCC 39541 / Classical Ogawa 395 / O395</strain>
    </source>
</reference>
<evidence type="ECO:0000250" key="1"/>
<evidence type="ECO:0000255" key="2">
    <source>
        <dbReference type="PROSITE-ProRule" id="PRU00254"/>
    </source>
</evidence>
<evidence type="ECO:0000305" key="3"/>
<feature type="chain" id="PRO_0000321855" description="HTH-type transcriptional regulator CueR">
    <location>
        <begin position="1"/>
        <end position="139"/>
    </location>
</feature>
<feature type="domain" description="HTH merR-type" evidence="2">
    <location>
        <begin position="1"/>
        <end position="69"/>
    </location>
</feature>
<feature type="DNA-binding region" description="H-T-H motif" evidence="2">
    <location>
        <begin position="4"/>
        <end position="23"/>
    </location>
</feature>
<feature type="binding site" evidence="1">
    <location>
        <position position="112"/>
    </location>
    <ligand>
        <name>Cu(+)</name>
        <dbReference type="ChEBI" id="CHEBI:49552"/>
    </ligand>
</feature>
<feature type="binding site" evidence="1">
    <location>
        <position position="120"/>
    </location>
    <ligand>
        <name>Cu(+)</name>
        <dbReference type="ChEBI" id="CHEBI:49552"/>
    </ligand>
</feature>
<keyword id="KW-0010">Activator</keyword>
<keyword id="KW-0186">Copper</keyword>
<keyword id="KW-0963">Cytoplasm</keyword>
<keyword id="KW-0238">DNA-binding</keyword>
<keyword id="KW-0479">Metal-binding</keyword>
<keyword id="KW-0804">Transcription</keyword>
<keyword id="KW-0805">Transcription regulation</keyword>
<sequence>MNISQIAKLTSLTAKSIRLYEEKGLIIPPLRSESGYRTYTQQHVDDLLLIARCRRVGFSLDECKAMLTLANDPNRTSAAVRARAQEKWQEISRKLSELTMIKQQLEEWIASCPGDQGSDCPIIEQLKGHCCSNNKTKTP</sequence>
<accession>A5F2W6</accession>
<accession>C3LYY5</accession>
<accession>Q9EVT1</accession>
<accession>Q9KTC8</accession>
<organism>
    <name type="scientific">Vibrio cholerae serotype O1 (strain ATCC 39541 / Classical Ogawa 395 / O395)</name>
    <dbReference type="NCBI Taxonomy" id="345073"/>
    <lineage>
        <taxon>Bacteria</taxon>
        <taxon>Pseudomonadati</taxon>
        <taxon>Pseudomonadota</taxon>
        <taxon>Gammaproteobacteria</taxon>
        <taxon>Vibrionales</taxon>
        <taxon>Vibrionaceae</taxon>
        <taxon>Vibrio</taxon>
    </lineage>
</organism>
<name>CUER_VIBC3</name>
<proteinExistence type="inferred from homology"/>
<protein>
    <recommendedName>
        <fullName>HTH-type transcriptional regulator CueR</fullName>
    </recommendedName>
    <alternativeName>
        <fullName>Copper efflux regulator</fullName>
    </alternativeName>
    <alternativeName>
        <fullName>Copper export regulator</fullName>
    </alternativeName>
</protein>
<gene>
    <name type="primary">cueR</name>
    <name type="synonym">vvgR</name>
    <name type="ordered locus">VC0395_A0495</name>
    <name type="ordered locus">VC395_0989</name>
</gene>
<comment type="function">
    <text evidence="1">Regulates the transcription of the copA and cueO genes. It detects cytoplasmic copper stress and activates transcription in response to increasing copper concentrations (By similarity).</text>
</comment>
<comment type="subunit">
    <text evidence="1">Homodimer.</text>
</comment>
<comment type="subcellular location">
    <subcellularLocation>
        <location evidence="3">Cytoplasm</location>
    </subcellularLocation>
</comment>
<comment type="domain">
    <text evidence="1">It contains a N-terminal DNA binding region and a C-terminal metal binding region.</text>
</comment>
<comment type="sequence caution" evidence="3">
    <conflict type="erroneous initiation">
        <sequence resource="EMBL-CDS" id="CAC21398"/>
    </conflict>
</comment>